<keyword id="KW-0694">RNA-binding</keyword>
<keyword id="KW-0804">Transcription</keyword>
<keyword id="KW-0889">Transcription antitermination</keyword>
<keyword id="KW-0805">Transcription regulation</keyword>
<evidence type="ECO:0000255" key="1">
    <source>
        <dbReference type="HAMAP-Rule" id="MF_00073"/>
    </source>
</evidence>
<organism>
    <name type="scientific">Acinetobacter baumannii (strain SDF)</name>
    <dbReference type="NCBI Taxonomy" id="509170"/>
    <lineage>
        <taxon>Bacteria</taxon>
        <taxon>Pseudomonadati</taxon>
        <taxon>Pseudomonadota</taxon>
        <taxon>Gammaproteobacteria</taxon>
        <taxon>Moraxellales</taxon>
        <taxon>Moraxellaceae</taxon>
        <taxon>Acinetobacter</taxon>
        <taxon>Acinetobacter calcoaceticus/baumannii complex</taxon>
    </lineage>
</organism>
<comment type="function">
    <text evidence="1">Involved in transcription antitermination. Required for transcription of ribosomal RNA (rRNA) genes. Binds specifically to the boxA antiterminator sequence of the ribosomal RNA (rrn) operons.</text>
</comment>
<comment type="similarity">
    <text evidence="1">Belongs to the NusB family.</text>
</comment>
<proteinExistence type="inferred from homology"/>
<dbReference type="EMBL" id="CU468230">
    <property type="protein sequence ID" value="CAP02830.1"/>
    <property type="molecule type" value="Genomic_DNA"/>
</dbReference>
<dbReference type="SMR" id="B0VPT9"/>
<dbReference type="KEGG" id="abm:ABSDF3571"/>
<dbReference type="HOGENOM" id="CLU_087843_4_1_6"/>
<dbReference type="Proteomes" id="UP000001741">
    <property type="component" value="Chromosome"/>
</dbReference>
<dbReference type="GO" id="GO:0005829">
    <property type="term" value="C:cytosol"/>
    <property type="evidence" value="ECO:0007669"/>
    <property type="project" value="TreeGrafter"/>
</dbReference>
<dbReference type="GO" id="GO:0003723">
    <property type="term" value="F:RNA binding"/>
    <property type="evidence" value="ECO:0007669"/>
    <property type="project" value="UniProtKB-UniRule"/>
</dbReference>
<dbReference type="GO" id="GO:0006353">
    <property type="term" value="P:DNA-templated transcription termination"/>
    <property type="evidence" value="ECO:0007669"/>
    <property type="project" value="UniProtKB-UniRule"/>
</dbReference>
<dbReference type="GO" id="GO:0031564">
    <property type="term" value="P:transcription antitermination"/>
    <property type="evidence" value="ECO:0007669"/>
    <property type="project" value="UniProtKB-KW"/>
</dbReference>
<dbReference type="Gene3D" id="1.10.940.10">
    <property type="entry name" value="NusB-like"/>
    <property type="match status" value="1"/>
</dbReference>
<dbReference type="HAMAP" id="MF_00073">
    <property type="entry name" value="NusB"/>
    <property type="match status" value="1"/>
</dbReference>
<dbReference type="InterPro" id="IPR035926">
    <property type="entry name" value="NusB-like_sf"/>
</dbReference>
<dbReference type="InterPro" id="IPR011605">
    <property type="entry name" value="NusB_fam"/>
</dbReference>
<dbReference type="InterPro" id="IPR006027">
    <property type="entry name" value="NusB_RsmB_TIM44"/>
</dbReference>
<dbReference type="NCBIfam" id="TIGR01951">
    <property type="entry name" value="nusB"/>
    <property type="match status" value="1"/>
</dbReference>
<dbReference type="PANTHER" id="PTHR11078:SF3">
    <property type="entry name" value="ANTITERMINATION NUSB DOMAIN-CONTAINING PROTEIN"/>
    <property type="match status" value="1"/>
</dbReference>
<dbReference type="PANTHER" id="PTHR11078">
    <property type="entry name" value="N UTILIZATION SUBSTANCE PROTEIN B-RELATED"/>
    <property type="match status" value="1"/>
</dbReference>
<dbReference type="Pfam" id="PF01029">
    <property type="entry name" value="NusB"/>
    <property type="match status" value="1"/>
</dbReference>
<dbReference type="SUPFAM" id="SSF48013">
    <property type="entry name" value="NusB-like"/>
    <property type="match status" value="1"/>
</dbReference>
<accession>B0VPT9</accession>
<reference key="1">
    <citation type="journal article" date="2008" name="PLoS ONE">
        <title>Comparative analysis of Acinetobacters: three genomes for three lifestyles.</title>
        <authorList>
            <person name="Vallenet D."/>
            <person name="Nordmann P."/>
            <person name="Barbe V."/>
            <person name="Poirel L."/>
            <person name="Mangenot S."/>
            <person name="Bataille E."/>
            <person name="Dossat C."/>
            <person name="Gas S."/>
            <person name="Kreimeyer A."/>
            <person name="Lenoble P."/>
            <person name="Oztas S."/>
            <person name="Poulain J."/>
            <person name="Segurens B."/>
            <person name="Robert C."/>
            <person name="Abergel C."/>
            <person name="Claverie J.-M."/>
            <person name="Raoult D."/>
            <person name="Medigue C."/>
            <person name="Weissenbach J."/>
            <person name="Cruveiller S."/>
        </authorList>
    </citation>
    <scope>NUCLEOTIDE SEQUENCE [LARGE SCALE GENOMIC DNA]</scope>
    <source>
        <strain>SDF</strain>
    </source>
</reference>
<gene>
    <name evidence="1" type="primary">nusB</name>
    <name type="ordered locus">ABSDF3571</name>
</gene>
<protein>
    <recommendedName>
        <fullName evidence="1">Transcription antitermination protein NusB</fullName>
    </recommendedName>
    <alternativeName>
        <fullName evidence="1">Antitermination factor NusB</fullName>
    </alternativeName>
</protein>
<name>NUSB_ACIBS</name>
<sequence>MYQTLQAAYAAKRKARRFAVQGIYEWQMSHNPVHEIEARTRAENAMHKVDLNYYHELLTQVIAQHEDLDALLIPVLDREIDALDGVELATLRLGAYELRDHLEIPYRVVLDEAIELAKHFGGADSHKYINGVLDRLSSTLRSAEKQQAK</sequence>
<feature type="chain" id="PRO_1000092518" description="Transcription antitermination protein NusB">
    <location>
        <begin position="1"/>
        <end position="149"/>
    </location>
</feature>